<accession>A0A0S2PM92</accession>
<evidence type="ECO:0000250" key="1">
    <source>
        <dbReference type="UniProtKB" id="A0A0S2PMA8"/>
    </source>
</evidence>
<evidence type="ECO:0000250" key="2">
    <source>
        <dbReference type="UniProtKB" id="A0A6C0WW36"/>
    </source>
</evidence>
<evidence type="ECO:0000250" key="3">
    <source>
        <dbReference type="UniProtKB" id="Q2HXI6"/>
    </source>
</evidence>
<evidence type="ECO:0000250" key="4">
    <source>
        <dbReference type="UniProtKB" id="Q9FLN8"/>
    </source>
</evidence>
<evidence type="ECO:0000250" key="5">
    <source>
        <dbReference type="UniProtKB" id="Q9FZN8"/>
    </source>
</evidence>
<evidence type="ECO:0000269" key="6">
    <source>
    </source>
</evidence>
<evidence type="ECO:0000303" key="7">
    <source>
    </source>
</evidence>
<evidence type="ECO:0000305" key="8"/>
<dbReference type="EC" id="2.1.1.160" evidence="6"/>
<dbReference type="EMBL" id="KT215398">
    <property type="protein sequence ID" value="ALP01720.1"/>
    <property type="molecule type" value="mRNA"/>
</dbReference>
<dbReference type="SMR" id="A0A0S2PM92"/>
<dbReference type="GO" id="GO:0102741">
    <property type="term" value="F:caffeine synthase activity"/>
    <property type="evidence" value="ECO:0007669"/>
    <property type="project" value="UniProtKB-EC"/>
</dbReference>
<dbReference type="GO" id="GO:0046872">
    <property type="term" value="F:metal ion binding"/>
    <property type="evidence" value="ECO:0007669"/>
    <property type="project" value="UniProtKB-KW"/>
</dbReference>
<dbReference type="GO" id="GO:0032259">
    <property type="term" value="P:methylation"/>
    <property type="evidence" value="ECO:0007669"/>
    <property type="project" value="UniProtKB-KW"/>
</dbReference>
<dbReference type="Gene3D" id="1.10.1200.270">
    <property type="entry name" value="Methyltransferase, alpha-helical capping domain"/>
    <property type="match status" value="1"/>
</dbReference>
<dbReference type="Gene3D" id="3.40.50.150">
    <property type="entry name" value="Vaccinia Virus protein VP39"/>
    <property type="match status" value="1"/>
</dbReference>
<dbReference type="InterPro" id="IPR005299">
    <property type="entry name" value="MeTrfase_7"/>
</dbReference>
<dbReference type="InterPro" id="IPR042086">
    <property type="entry name" value="MeTrfase_capping"/>
</dbReference>
<dbReference type="InterPro" id="IPR029063">
    <property type="entry name" value="SAM-dependent_MTases_sf"/>
</dbReference>
<dbReference type="PANTHER" id="PTHR31009">
    <property type="entry name" value="S-ADENOSYL-L-METHIONINE:CARBOXYL METHYLTRANSFERASE FAMILY PROTEIN"/>
    <property type="match status" value="1"/>
</dbReference>
<dbReference type="Pfam" id="PF03492">
    <property type="entry name" value="Methyltransf_7"/>
    <property type="match status" value="1"/>
</dbReference>
<dbReference type="SUPFAM" id="SSF53335">
    <property type="entry name" value="S-adenosyl-L-methionine-dependent methyltransferases"/>
    <property type="match status" value="1"/>
</dbReference>
<keyword id="KW-0460">Magnesium</keyword>
<keyword id="KW-0479">Metal-binding</keyword>
<keyword id="KW-0489">Methyltransferase</keyword>
<keyword id="KW-0808">Transferase</keyword>
<gene>
    <name evidence="7" type="primary">TCS1F</name>
</gene>
<reference key="1">
    <citation type="submission" date="2015-06" db="EMBL/GenBank/DDBJ databases">
        <authorList>
            <person name="Hoefler B.C."/>
            <person name="Straight P.D."/>
        </authorList>
    </citation>
    <scope>NUCLEOTIDE SEQUENCE [MRNA]</scope>
</reference>
<reference key="2">
    <citation type="journal article" date="2016" name="Plant Physiol. Biochem.">
        <title>Natural allelic variations of TCS1 play a crucial role in caffeine biosynthesis of tea plant and its related species.</title>
        <authorList>
            <person name="Jin J.-Q."/>
            <person name="Yao M.-Z."/>
            <person name="Ma C.-L."/>
            <person name="Ma J.-Q."/>
            <person name="Chen L."/>
        </authorList>
    </citation>
    <scope>FUNCTION</scope>
    <scope>CATALYTIC ACTIVITY</scope>
    <scope>GENE FAMILY</scope>
    <scope>NOMENCLATURE</scope>
</reference>
<name>TCS1F_CAMCR</name>
<protein>
    <recommendedName>
        <fullName evidence="7">Caffeine synthase 1</fullName>
        <shortName evidence="7">TCS1f</shortName>
        <ecNumber evidence="6">2.1.1.160</ecNumber>
    </recommendedName>
</protein>
<sequence length="369" mass="41413">MELATTGKVNEVLFMNRGEGESSYAQNSSFTQQVASMATLALENAVETLFSKDFHLQALNATDLGCAAGPNTFAVISTIKRMMEKKCRELNCQTLELQVYLNDLFGNDFNTLFKGLSSEVIGNKCEEVPCYVMGVPGSFHGRLFPRNSLHLVHSSYSVHWLTQAPKGLTNREGLALNKGKIYISKTSPPIVREAYLSQFHEDFTMFLNARSQEVVPNGCMVLILRGRQSSDPSDMQSCFTWELLAIAIAELVSQGLIDEDKLDTFNIPCYFPSLEEVKDIVERDGSFTIDHMEGFELDSLQMQENDKWVRGENFTKVVRAFTEPIISNQFGHEIMDKLYDKFTHIVVSDLEAKLPKTTSIILVLSKIDG</sequence>
<feature type="chain" id="PRO_0000451800" description="Caffeine synthase 1">
    <location>
        <begin position="1"/>
        <end position="369"/>
    </location>
</feature>
<feature type="binding site" evidence="2">
    <location>
        <position position="24"/>
    </location>
    <ligand>
        <name>S-adenosyl-L-homocysteine</name>
        <dbReference type="ChEBI" id="CHEBI:57856"/>
    </ligand>
</feature>
<feature type="binding site" evidence="2">
    <location>
        <position position="31"/>
    </location>
    <ligand>
        <name>caffeine</name>
        <dbReference type="ChEBI" id="CHEBI:27732"/>
    </ligand>
</feature>
<feature type="binding site" evidence="2">
    <location>
        <position position="66"/>
    </location>
    <ligand>
        <name>S-adenosyl-L-homocysteine</name>
        <dbReference type="ChEBI" id="CHEBI:57856"/>
    </ligand>
</feature>
<feature type="binding site" evidence="2">
    <location>
        <position position="71"/>
    </location>
    <ligand>
        <name>S-adenosyl-L-homocysteine</name>
        <dbReference type="ChEBI" id="CHEBI:57856"/>
    </ligand>
</feature>
<feature type="binding site" evidence="2">
    <location>
        <position position="103"/>
    </location>
    <ligand>
        <name>S-adenosyl-L-homocysteine</name>
        <dbReference type="ChEBI" id="CHEBI:57856"/>
    </ligand>
</feature>
<feature type="binding site" evidence="2">
    <location>
        <position position="104"/>
    </location>
    <ligand>
        <name>S-adenosyl-L-homocysteine</name>
        <dbReference type="ChEBI" id="CHEBI:57856"/>
    </ligand>
</feature>
<feature type="binding site" evidence="2">
    <location>
        <position position="138"/>
    </location>
    <ligand>
        <name>S-adenosyl-L-homocysteine</name>
        <dbReference type="ChEBI" id="CHEBI:57856"/>
    </ligand>
</feature>
<feature type="binding site" evidence="2">
    <location>
        <position position="139"/>
    </location>
    <ligand>
        <name>S-adenosyl-L-homocysteine</name>
        <dbReference type="ChEBI" id="CHEBI:57856"/>
    </ligand>
</feature>
<feature type="binding site" evidence="2">
    <location>
        <position position="156"/>
    </location>
    <ligand>
        <name>caffeine</name>
        <dbReference type="ChEBI" id="CHEBI:27732"/>
    </ligand>
</feature>
<feature type="binding site" evidence="2">
    <location>
        <position position="159"/>
    </location>
    <ligand>
        <name>caffeine</name>
        <dbReference type="ChEBI" id="CHEBI:27732"/>
    </ligand>
</feature>
<feature type="binding site" evidence="2">
    <location>
        <position position="160"/>
    </location>
    <ligand>
        <name>caffeine</name>
        <dbReference type="ChEBI" id="CHEBI:27732"/>
    </ligand>
</feature>
<feature type="binding site" evidence="4">
    <location>
        <position position="177"/>
    </location>
    <ligand>
        <name>Mg(2+)</name>
        <dbReference type="ChEBI" id="CHEBI:18420"/>
    </ligand>
</feature>
<feature type="binding site" evidence="2">
    <location>
        <position position="225"/>
    </location>
    <ligand>
        <name>caffeine</name>
        <dbReference type="ChEBI" id="CHEBI:27732"/>
    </ligand>
</feature>
<feature type="binding site" evidence="4">
    <location>
        <position position="263"/>
    </location>
    <ligand>
        <name>Mg(2+)</name>
        <dbReference type="ChEBI" id="CHEBI:18420"/>
    </ligand>
</feature>
<feature type="binding site" evidence="4">
    <location>
        <position position="265"/>
    </location>
    <ligand>
        <name>Mg(2+)</name>
        <dbReference type="ChEBI" id="CHEBI:18420"/>
    </ligand>
</feature>
<feature type="binding site" evidence="4">
    <location>
        <position position="266"/>
    </location>
    <ligand>
        <name>Mg(2+)</name>
        <dbReference type="ChEBI" id="CHEBI:18420"/>
    </ligand>
</feature>
<feature type="binding site" evidence="2">
    <location>
        <position position="321"/>
    </location>
    <ligand>
        <name>caffeine</name>
        <dbReference type="ChEBI" id="CHEBI:27732"/>
    </ligand>
</feature>
<feature type="site" description="Involved in substrate discrimination" evidence="5">
    <location>
        <position position="153"/>
    </location>
</feature>
<feature type="site" description="Involved in substrate discrimination" evidence="3">
    <location>
        <position position="225"/>
    </location>
</feature>
<feature type="site" description="Involved in substrate discrimination" evidence="1">
    <location>
        <position position="269"/>
    </location>
</feature>
<feature type="site" description="Involved in substrate discrimination" evidence="5">
    <location>
        <position position="317"/>
    </location>
</feature>
<feature type="site" description="Involved in substrate discrimination" evidence="5">
    <location>
        <position position="332"/>
    </location>
</feature>
<comment type="function">
    <text evidence="6">Involved in the biosynthesis of caffeine (PubMed:26773541). Catalyzes the conversion of 7-methylxanthine (7mX) to theobromine and of theobromine to caffeine (PubMed:26773541).</text>
</comment>
<comment type="catalytic activity">
    <reaction evidence="6">
        <text>theobromine + S-adenosyl-L-methionine = caffeine + S-adenosyl-L-homocysteine + H(+)</text>
        <dbReference type="Rhea" id="RHEA:20944"/>
        <dbReference type="ChEBI" id="CHEBI:15378"/>
        <dbReference type="ChEBI" id="CHEBI:27732"/>
        <dbReference type="ChEBI" id="CHEBI:28946"/>
        <dbReference type="ChEBI" id="CHEBI:57856"/>
        <dbReference type="ChEBI" id="CHEBI:59789"/>
        <dbReference type="EC" id="2.1.1.160"/>
    </reaction>
    <physiologicalReaction direction="left-to-right" evidence="6">
        <dbReference type="Rhea" id="RHEA:20945"/>
    </physiologicalReaction>
</comment>
<comment type="catalytic activity">
    <reaction evidence="6">
        <text>7-methylxanthine + S-adenosyl-L-methionine = theobromine + S-adenosyl-L-homocysteine + H(+)</text>
        <dbReference type="Rhea" id="RHEA:24604"/>
        <dbReference type="ChEBI" id="CHEBI:15378"/>
        <dbReference type="ChEBI" id="CHEBI:28946"/>
        <dbReference type="ChEBI" id="CHEBI:48991"/>
        <dbReference type="ChEBI" id="CHEBI:57856"/>
        <dbReference type="ChEBI" id="CHEBI:59789"/>
        <dbReference type="EC" id="2.1.1.160"/>
    </reaction>
    <physiologicalReaction direction="left-to-right" evidence="6">
        <dbReference type="Rhea" id="RHEA:24605"/>
    </physiologicalReaction>
</comment>
<comment type="cofactor">
    <cofactor evidence="4">
        <name>Mg(2+)</name>
        <dbReference type="ChEBI" id="CHEBI:18420"/>
    </cofactor>
    <text evidence="4">Binds 1 Mg(2+) ion per subunit.</text>
</comment>
<comment type="pathway">
    <text evidence="5">Alkaloid biosynthesis.</text>
</comment>
<comment type="similarity">
    <text evidence="8">Belongs to the methyltransferase superfamily. Type-7 methyltransferase family.</text>
</comment>
<proteinExistence type="evidence at protein level"/>
<organism>
    <name type="scientific">Camellia crassicolumna</name>
    <name type="common">Evergreen tea</name>
    <dbReference type="NCBI Taxonomy" id="1407748"/>
    <lineage>
        <taxon>Eukaryota</taxon>
        <taxon>Viridiplantae</taxon>
        <taxon>Streptophyta</taxon>
        <taxon>Embryophyta</taxon>
        <taxon>Tracheophyta</taxon>
        <taxon>Spermatophyta</taxon>
        <taxon>Magnoliopsida</taxon>
        <taxon>eudicotyledons</taxon>
        <taxon>Gunneridae</taxon>
        <taxon>Pentapetalae</taxon>
        <taxon>asterids</taxon>
        <taxon>Ericales</taxon>
        <taxon>Theaceae</taxon>
        <taxon>Camellia</taxon>
    </lineage>
</organism>